<keyword id="KW-0488">Methylation</keyword>
<keyword id="KW-0687">Ribonucleoprotein</keyword>
<keyword id="KW-0689">Ribosomal protein</keyword>
<keyword id="KW-0694">RNA-binding</keyword>
<keyword id="KW-0699">rRNA-binding</keyword>
<name>RL3_SALPC</name>
<feature type="chain" id="PRO_1000165901" description="Large ribosomal subunit protein uL3">
    <location>
        <begin position="1"/>
        <end position="209"/>
    </location>
</feature>
<feature type="modified residue" description="N5-methylglutamine" evidence="1">
    <location>
        <position position="150"/>
    </location>
</feature>
<gene>
    <name evidence="1" type="primary">rplC</name>
    <name type="ordered locus">SPC_3509</name>
</gene>
<dbReference type="EMBL" id="CP000857">
    <property type="protein sequence ID" value="ACN47593.1"/>
    <property type="molecule type" value="Genomic_DNA"/>
</dbReference>
<dbReference type="RefSeq" id="WP_000579838.1">
    <property type="nucleotide sequence ID" value="NC_012125.1"/>
</dbReference>
<dbReference type="SMR" id="C0Q0B6"/>
<dbReference type="KEGG" id="sei:SPC_3509"/>
<dbReference type="HOGENOM" id="CLU_044142_4_1_6"/>
<dbReference type="Proteomes" id="UP000001599">
    <property type="component" value="Chromosome"/>
</dbReference>
<dbReference type="GO" id="GO:0022625">
    <property type="term" value="C:cytosolic large ribosomal subunit"/>
    <property type="evidence" value="ECO:0007669"/>
    <property type="project" value="TreeGrafter"/>
</dbReference>
<dbReference type="GO" id="GO:0019843">
    <property type="term" value="F:rRNA binding"/>
    <property type="evidence" value="ECO:0007669"/>
    <property type="project" value="UniProtKB-UniRule"/>
</dbReference>
<dbReference type="GO" id="GO:0003735">
    <property type="term" value="F:structural constituent of ribosome"/>
    <property type="evidence" value="ECO:0007669"/>
    <property type="project" value="InterPro"/>
</dbReference>
<dbReference type="GO" id="GO:0006412">
    <property type="term" value="P:translation"/>
    <property type="evidence" value="ECO:0007669"/>
    <property type="project" value="UniProtKB-UniRule"/>
</dbReference>
<dbReference type="FunFam" id="2.40.30.10:FF:000004">
    <property type="entry name" value="50S ribosomal protein L3"/>
    <property type="match status" value="1"/>
</dbReference>
<dbReference type="FunFam" id="3.30.160.810:FF:000001">
    <property type="entry name" value="50S ribosomal protein L3"/>
    <property type="match status" value="1"/>
</dbReference>
<dbReference type="Gene3D" id="3.30.160.810">
    <property type="match status" value="1"/>
</dbReference>
<dbReference type="Gene3D" id="2.40.30.10">
    <property type="entry name" value="Translation factors"/>
    <property type="match status" value="1"/>
</dbReference>
<dbReference type="HAMAP" id="MF_01325_B">
    <property type="entry name" value="Ribosomal_uL3_B"/>
    <property type="match status" value="1"/>
</dbReference>
<dbReference type="InterPro" id="IPR000597">
    <property type="entry name" value="Ribosomal_uL3"/>
</dbReference>
<dbReference type="InterPro" id="IPR019927">
    <property type="entry name" value="Ribosomal_uL3_bac/org-type"/>
</dbReference>
<dbReference type="InterPro" id="IPR019926">
    <property type="entry name" value="Ribosomal_uL3_CS"/>
</dbReference>
<dbReference type="InterPro" id="IPR009000">
    <property type="entry name" value="Transl_B-barrel_sf"/>
</dbReference>
<dbReference type="NCBIfam" id="TIGR03625">
    <property type="entry name" value="L3_bact"/>
    <property type="match status" value="1"/>
</dbReference>
<dbReference type="PANTHER" id="PTHR11229">
    <property type="entry name" value="50S RIBOSOMAL PROTEIN L3"/>
    <property type="match status" value="1"/>
</dbReference>
<dbReference type="PANTHER" id="PTHR11229:SF16">
    <property type="entry name" value="LARGE RIBOSOMAL SUBUNIT PROTEIN UL3C"/>
    <property type="match status" value="1"/>
</dbReference>
<dbReference type="Pfam" id="PF00297">
    <property type="entry name" value="Ribosomal_L3"/>
    <property type="match status" value="1"/>
</dbReference>
<dbReference type="SUPFAM" id="SSF50447">
    <property type="entry name" value="Translation proteins"/>
    <property type="match status" value="1"/>
</dbReference>
<dbReference type="PROSITE" id="PS00474">
    <property type="entry name" value="RIBOSOMAL_L3"/>
    <property type="match status" value="1"/>
</dbReference>
<reference key="1">
    <citation type="journal article" date="2009" name="PLoS ONE">
        <title>Salmonella paratyphi C: genetic divergence from Salmonella choleraesuis and pathogenic convergence with Salmonella typhi.</title>
        <authorList>
            <person name="Liu W.-Q."/>
            <person name="Feng Y."/>
            <person name="Wang Y."/>
            <person name="Zou Q.-H."/>
            <person name="Chen F."/>
            <person name="Guo J.-T."/>
            <person name="Peng Y.-H."/>
            <person name="Jin Y."/>
            <person name="Li Y.-G."/>
            <person name="Hu S.-N."/>
            <person name="Johnston R.N."/>
            <person name="Liu G.-R."/>
            <person name="Liu S.-L."/>
        </authorList>
    </citation>
    <scope>NUCLEOTIDE SEQUENCE [LARGE SCALE GENOMIC DNA]</scope>
    <source>
        <strain>RKS4594</strain>
    </source>
</reference>
<accession>C0Q0B6</accession>
<comment type="function">
    <text evidence="1">One of the primary rRNA binding proteins, it binds directly near the 3'-end of the 23S rRNA, where it nucleates assembly of the 50S subunit.</text>
</comment>
<comment type="subunit">
    <text evidence="1">Part of the 50S ribosomal subunit. Forms a cluster with proteins L14 and L19.</text>
</comment>
<comment type="PTM">
    <text evidence="1">Methylated by PrmB.</text>
</comment>
<comment type="similarity">
    <text evidence="1">Belongs to the universal ribosomal protein uL3 family.</text>
</comment>
<organism>
    <name type="scientific">Salmonella paratyphi C (strain RKS4594)</name>
    <dbReference type="NCBI Taxonomy" id="476213"/>
    <lineage>
        <taxon>Bacteria</taxon>
        <taxon>Pseudomonadati</taxon>
        <taxon>Pseudomonadota</taxon>
        <taxon>Gammaproteobacteria</taxon>
        <taxon>Enterobacterales</taxon>
        <taxon>Enterobacteriaceae</taxon>
        <taxon>Salmonella</taxon>
    </lineage>
</organism>
<evidence type="ECO:0000255" key="1">
    <source>
        <dbReference type="HAMAP-Rule" id="MF_01325"/>
    </source>
</evidence>
<evidence type="ECO:0000305" key="2"/>
<sequence length="209" mass="22248">MIGLVGKKVGMTRIFTEDGVSIPVTVIEVEANRVTQVKDLANDGYRAVQVTTGAKKANRVTKPEAGHFAKAGVEAGRGLWEFRLAEGEEYTVGQSISVELFADVKKVDVTGTSKGKGFAGTVKRWNFRTQDATHGNSLSHRVPGSIGQNQTPGKVFKGKKMAGQMGNERVTVQSLDVVRVDAERNLLLVKGGVPGATGCDLIVKPAVKA</sequence>
<protein>
    <recommendedName>
        <fullName evidence="1">Large ribosomal subunit protein uL3</fullName>
    </recommendedName>
    <alternativeName>
        <fullName evidence="2">50S ribosomal protein L3</fullName>
    </alternativeName>
</protein>
<proteinExistence type="inferred from homology"/>